<comment type="function">
    <text evidence="1">Represses a number of genes involved in the response to DNA damage (SOS response), including recA and lexA. In the presence of single-stranded DNA, RecA interacts with LexA causing an autocatalytic cleavage which disrupts the DNA-binding part of LexA, leading to derepression of the SOS regulon and eventually DNA repair.</text>
</comment>
<comment type="catalytic activity">
    <reaction evidence="1">
        <text>Hydrolysis of Ala-|-Gly bond in repressor LexA.</text>
        <dbReference type="EC" id="3.4.21.88"/>
    </reaction>
</comment>
<comment type="subunit">
    <text evidence="1">Homodimer.</text>
</comment>
<comment type="similarity">
    <text evidence="1">Belongs to the peptidase S24 family.</text>
</comment>
<gene>
    <name evidence="1" type="primary">lexA</name>
    <name type="ordered locus">Gmet_1439</name>
</gene>
<name>LEXA_GEOMG</name>
<evidence type="ECO:0000255" key="1">
    <source>
        <dbReference type="HAMAP-Rule" id="MF_00015"/>
    </source>
</evidence>
<organism>
    <name type="scientific">Geobacter metallireducens (strain ATCC 53774 / DSM 7210 / GS-15)</name>
    <dbReference type="NCBI Taxonomy" id="269799"/>
    <lineage>
        <taxon>Bacteria</taxon>
        <taxon>Pseudomonadati</taxon>
        <taxon>Thermodesulfobacteriota</taxon>
        <taxon>Desulfuromonadia</taxon>
        <taxon>Geobacterales</taxon>
        <taxon>Geobacteraceae</taxon>
        <taxon>Geobacter</taxon>
    </lineage>
</organism>
<accession>Q39VQ1</accession>
<reference key="1">
    <citation type="journal article" date="2009" name="BMC Microbiol.">
        <title>The genome sequence of Geobacter metallireducens: features of metabolism, physiology and regulation common and dissimilar to Geobacter sulfurreducens.</title>
        <authorList>
            <person name="Aklujkar M."/>
            <person name="Krushkal J."/>
            <person name="DiBartolo G."/>
            <person name="Lapidus A."/>
            <person name="Land M.L."/>
            <person name="Lovley D.R."/>
        </authorList>
    </citation>
    <scope>NUCLEOTIDE SEQUENCE [LARGE SCALE GENOMIC DNA]</scope>
    <source>
        <strain>ATCC 53774 / DSM 7210 / GS-15</strain>
    </source>
</reference>
<proteinExistence type="inferred from homology"/>
<dbReference type="EC" id="3.4.21.88" evidence="1"/>
<dbReference type="EMBL" id="CP000148">
    <property type="protein sequence ID" value="ABB31673.1"/>
    <property type="molecule type" value="Genomic_DNA"/>
</dbReference>
<dbReference type="RefSeq" id="WP_004511630.1">
    <property type="nucleotide sequence ID" value="NC_007517.1"/>
</dbReference>
<dbReference type="SMR" id="Q39VQ1"/>
<dbReference type="STRING" id="269799.Gmet_1439"/>
<dbReference type="MEROPS" id="S24.001"/>
<dbReference type="KEGG" id="gme:Gmet_1439"/>
<dbReference type="eggNOG" id="COG1974">
    <property type="taxonomic scope" value="Bacteria"/>
</dbReference>
<dbReference type="HOGENOM" id="CLU_066192_45_1_7"/>
<dbReference type="Proteomes" id="UP000007073">
    <property type="component" value="Chromosome"/>
</dbReference>
<dbReference type="GO" id="GO:0003677">
    <property type="term" value="F:DNA binding"/>
    <property type="evidence" value="ECO:0007669"/>
    <property type="project" value="UniProtKB-UniRule"/>
</dbReference>
<dbReference type="GO" id="GO:0004252">
    <property type="term" value="F:serine-type endopeptidase activity"/>
    <property type="evidence" value="ECO:0007669"/>
    <property type="project" value="UniProtKB-UniRule"/>
</dbReference>
<dbReference type="GO" id="GO:0006281">
    <property type="term" value="P:DNA repair"/>
    <property type="evidence" value="ECO:0007669"/>
    <property type="project" value="UniProtKB-UniRule"/>
</dbReference>
<dbReference type="GO" id="GO:0006260">
    <property type="term" value="P:DNA replication"/>
    <property type="evidence" value="ECO:0007669"/>
    <property type="project" value="UniProtKB-UniRule"/>
</dbReference>
<dbReference type="GO" id="GO:0045892">
    <property type="term" value="P:negative regulation of DNA-templated transcription"/>
    <property type="evidence" value="ECO:0007669"/>
    <property type="project" value="UniProtKB-UniRule"/>
</dbReference>
<dbReference type="GO" id="GO:0006508">
    <property type="term" value="P:proteolysis"/>
    <property type="evidence" value="ECO:0007669"/>
    <property type="project" value="InterPro"/>
</dbReference>
<dbReference type="GO" id="GO:0009432">
    <property type="term" value="P:SOS response"/>
    <property type="evidence" value="ECO:0007669"/>
    <property type="project" value="UniProtKB-UniRule"/>
</dbReference>
<dbReference type="CDD" id="cd06529">
    <property type="entry name" value="S24_LexA-like"/>
    <property type="match status" value="1"/>
</dbReference>
<dbReference type="FunFam" id="1.10.10.10:FF:000009">
    <property type="entry name" value="LexA repressor"/>
    <property type="match status" value="1"/>
</dbReference>
<dbReference type="FunFam" id="2.10.109.10:FF:000001">
    <property type="entry name" value="LexA repressor"/>
    <property type="match status" value="1"/>
</dbReference>
<dbReference type="Gene3D" id="2.10.109.10">
    <property type="entry name" value="Umud Fragment, subunit A"/>
    <property type="match status" value="1"/>
</dbReference>
<dbReference type="Gene3D" id="1.10.10.10">
    <property type="entry name" value="Winged helix-like DNA-binding domain superfamily/Winged helix DNA-binding domain"/>
    <property type="match status" value="1"/>
</dbReference>
<dbReference type="HAMAP" id="MF_00015">
    <property type="entry name" value="LexA"/>
    <property type="match status" value="1"/>
</dbReference>
<dbReference type="InterPro" id="IPR006200">
    <property type="entry name" value="LexA"/>
</dbReference>
<dbReference type="InterPro" id="IPR039418">
    <property type="entry name" value="LexA-like"/>
</dbReference>
<dbReference type="InterPro" id="IPR036286">
    <property type="entry name" value="LexA/Signal_pep-like_sf"/>
</dbReference>
<dbReference type="InterPro" id="IPR006199">
    <property type="entry name" value="LexA_DNA-bd_dom"/>
</dbReference>
<dbReference type="InterPro" id="IPR050077">
    <property type="entry name" value="LexA_repressor"/>
</dbReference>
<dbReference type="InterPro" id="IPR006197">
    <property type="entry name" value="Peptidase_S24_LexA"/>
</dbReference>
<dbReference type="InterPro" id="IPR015927">
    <property type="entry name" value="Peptidase_S24_S26A/B/C"/>
</dbReference>
<dbReference type="InterPro" id="IPR036388">
    <property type="entry name" value="WH-like_DNA-bd_sf"/>
</dbReference>
<dbReference type="InterPro" id="IPR036390">
    <property type="entry name" value="WH_DNA-bd_sf"/>
</dbReference>
<dbReference type="NCBIfam" id="TIGR00498">
    <property type="entry name" value="lexA"/>
    <property type="match status" value="1"/>
</dbReference>
<dbReference type="PANTHER" id="PTHR33516">
    <property type="entry name" value="LEXA REPRESSOR"/>
    <property type="match status" value="1"/>
</dbReference>
<dbReference type="PANTHER" id="PTHR33516:SF2">
    <property type="entry name" value="LEXA REPRESSOR-RELATED"/>
    <property type="match status" value="1"/>
</dbReference>
<dbReference type="Pfam" id="PF01726">
    <property type="entry name" value="LexA_DNA_bind"/>
    <property type="match status" value="1"/>
</dbReference>
<dbReference type="Pfam" id="PF00717">
    <property type="entry name" value="Peptidase_S24"/>
    <property type="match status" value="1"/>
</dbReference>
<dbReference type="PRINTS" id="PR00726">
    <property type="entry name" value="LEXASERPTASE"/>
</dbReference>
<dbReference type="SUPFAM" id="SSF51306">
    <property type="entry name" value="LexA/Signal peptidase"/>
    <property type="match status" value="1"/>
</dbReference>
<dbReference type="SUPFAM" id="SSF46785">
    <property type="entry name" value="Winged helix' DNA-binding domain"/>
    <property type="match status" value="1"/>
</dbReference>
<feature type="chain" id="PRO_1000001286" description="LexA repressor">
    <location>
        <begin position="1"/>
        <end position="201"/>
    </location>
</feature>
<feature type="DNA-binding region" description="H-T-H motif" evidence="1">
    <location>
        <begin position="28"/>
        <end position="48"/>
    </location>
</feature>
<feature type="active site" description="For autocatalytic cleavage activity" evidence="1">
    <location>
        <position position="120"/>
    </location>
</feature>
<feature type="active site" description="For autocatalytic cleavage activity" evidence="1">
    <location>
        <position position="157"/>
    </location>
</feature>
<feature type="site" description="Cleavage; by autolysis" evidence="1">
    <location>
        <begin position="86"/>
        <end position="87"/>
    </location>
</feature>
<sequence>MEELTPRQNEVLRFLEGYLTQYGYPPTMRDIAAHLRISGTLGVSKHLTALERKGYIRRDPGNSRGISLVGHGSKSASLPIAGVVRAGMLQPAIEDIEGYLAIDQAQLKGGKFFLRVKGDSMVNAAILDGDLALIRPQPTAENNDIVVAMVDGEATLKAFYRERGQIRLQPRNPNMEPIIIREGEGEVAIVGKVVGIFRTLE</sequence>
<protein>
    <recommendedName>
        <fullName evidence="1">LexA repressor</fullName>
        <ecNumber evidence="1">3.4.21.88</ecNumber>
    </recommendedName>
</protein>
<keyword id="KW-0068">Autocatalytic cleavage</keyword>
<keyword id="KW-0227">DNA damage</keyword>
<keyword id="KW-0234">DNA repair</keyword>
<keyword id="KW-0235">DNA replication</keyword>
<keyword id="KW-0238">DNA-binding</keyword>
<keyword id="KW-0378">Hydrolase</keyword>
<keyword id="KW-1185">Reference proteome</keyword>
<keyword id="KW-0678">Repressor</keyword>
<keyword id="KW-0742">SOS response</keyword>
<keyword id="KW-0804">Transcription</keyword>
<keyword id="KW-0805">Transcription regulation</keyword>